<proteinExistence type="evidence at protein level"/>
<comment type="function">
    <text evidence="4">A site-2 regulated intramembrane protease (S2P) that cleaves type-2 transmembrane proteins within their membrane-spanning domains; its endogenous substrate is unknown. Regulated intramembrane proteolysis (RIP) occurs when an extracytoplasmic signal triggers a concerted proteolytic cascade to transmit information and elicit cellular responses. A membrane-spanning regulatory substrate protein is first cut extracytoplasmically (site-1 protease, S1P), then within the membrane itself (site-2 protease, S2P, this enzyme), while cytoplasmic proteases finish degrading the regulatory protein, liberating the effector protein. Possible signals, S1P and substrates are unknown in this organism.</text>
</comment>
<comment type="cofactor">
    <cofactor evidence="4">
        <name>Zn(2+)</name>
        <dbReference type="ChEBI" id="CHEBI:29105"/>
    </cofactor>
    <text evidence="4">Binds 1 zinc ion per subunit.</text>
</comment>
<comment type="activity regulation">
    <text evidence="4">Inhibited by 1,10-phenanthroline.</text>
</comment>
<comment type="subunit">
    <text evidence="6">Monomer.</text>
</comment>
<comment type="subcellular location">
    <subcellularLocation>
        <location evidence="5">Cell membrane</location>
        <topology evidence="5">Multi-pass membrane protein</topology>
    </subcellularLocation>
</comment>
<comment type="similarity">
    <text evidence="5">Belongs to the peptidase M50B family.</text>
</comment>
<organism>
    <name type="scientific">Methanocaldococcus jannaschii (strain ATCC 43067 / DSM 2661 / JAL-1 / JCM 10045 / NBRC 100440)</name>
    <name type="common">Methanococcus jannaschii</name>
    <dbReference type="NCBI Taxonomy" id="243232"/>
    <lineage>
        <taxon>Archaea</taxon>
        <taxon>Methanobacteriati</taxon>
        <taxon>Methanobacteriota</taxon>
        <taxon>Methanomada group</taxon>
        <taxon>Methanococci</taxon>
        <taxon>Methanococcales</taxon>
        <taxon>Methanocaldococcaceae</taxon>
        <taxon>Methanocaldococcus</taxon>
    </lineage>
</organism>
<sequence>MNYSIRLFKIMGIPIELHITFILFLVVIIGLSIMNNSIFWAVLFILLFVSVVLHELGHSYVAKKYGVKIEKILLLPIGGVAMMDKIPKEGELRIGIAGPLVSFIIGIVLLIVSQFFDININGYPLLYTLSLLNLMLGGFNLIPAFPMDGGRILRAILSKKYGYLKSTKIAANIGKSLALIMLLFGLLSMNIILILVSLFVYFGAEQESRVVEVETIFKNIKAKDIMTPNPVYVTPDMSIEEFLDFMLKHKYFGYPVVENGKLVGCIGIGNIHKKEGTVRDYMEKPVVVSEDTDIKEILRKMANTDRVFVVEGGKLKGIISKTDILRAMSILELKEELKD</sequence>
<dbReference type="EC" id="3.4.24.-"/>
<dbReference type="EMBL" id="L77117">
    <property type="protein sequence ID" value="AAB98382.1"/>
    <property type="molecule type" value="Genomic_DNA"/>
</dbReference>
<dbReference type="PIR" id="H64348">
    <property type="entry name" value="H64348"/>
</dbReference>
<dbReference type="RefSeq" id="WP_010869891.1">
    <property type="nucleotide sequence ID" value="NC_000909.1"/>
</dbReference>
<dbReference type="PDB" id="3B4R">
    <property type="method" value="X-ray"/>
    <property type="resolution" value="3.30 A"/>
    <property type="chains" value="A/B=1-224"/>
</dbReference>
<dbReference type="PDBsum" id="3B4R"/>
<dbReference type="SMR" id="Q57837"/>
<dbReference type="STRING" id="243232.MJ_0392"/>
<dbReference type="MEROPS" id="M50.006"/>
<dbReference type="PaxDb" id="243232-MJ_0392"/>
<dbReference type="EnsemblBacteria" id="AAB98382">
    <property type="protein sequence ID" value="AAB98382"/>
    <property type="gene ID" value="MJ_0392"/>
</dbReference>
<dbReference type="GeneID" id="1451249"/>
<dbReference type="KEGG" id="mja:MJ_0392"/>
<dbReference type="eggNOG" id="arCOG00607">
    <property type="taxonomic scope" value="Archaea"/>
</dbReference>
<dbReference type="HOGENOM" id="CLU_037123_1_1_2"/>
<dbReference type="InParanoid" id="Q57837"/>
<dbReference type="OrthoDB" id="12044at2157"/>
<dbReference type="PhylomeDB" id="Q57837"/>
<dbReference type="BRENDA" id="3.4.24.85">
    <property type="organism ID" value="3260"/>
</dbReference>
<dbReference type="EvolutionaryTrace" id="Q57837"/>
<dbReference type="Proteomes" id="UP000000805">
    <property type="component" value="Chromosome"/>
</dbReference>
<dbReference type="GO" id="GO:0005886">
    <property type="term" value="C:plasma membrane"/>
    <property type="evidence" value="ECO:0007669"/>
    <property type="project" value="UniProtKB-SubCell"/>
</dbReference>
<dbReference type="GO" id="GO:0046872">
    <property type="term" value="F:metal ion binding"/>
    <property type="evidence" value="ECO:0007669"/>
    <property type="project" value="UniProtKB-KW"/>
</dbReference>
<dbReference type="GO" id="GO:0008237">
    <property type="term" value="F:metallopeptidase activity"/>
    <property type="evidence" value="ECO:0007669"/>
    <property type="project" value="UniProtKB-KW"/>
</dbReference>
<dbReference type="GO" id="GO:0006508">
    <property type="term" value="P:proteolysis"/>
    <property type="evidence" value="ECO:0007669"/>
    <property type="project" value="UniProtKB-KW"/>
</dbReference>
<dbReference type="CDD" id="cd04801">
    <property type="entry name" value="CBS_pair_peptidase_M50"/>
    <property type="match status" value="1"/>
</dbReference>
<dbReference type="CDD" id="cd06164">
    <property type="entry name" value="S2P-M50_SpoIVFB_CBS"/>
    <property type="match status" value="1"/>
</dbReference>
<dbReference type="Gene3D" id="3.10.580.10">
    <property type="entry name" value="CBS-domain"/>
    <property type="match status" value="2"/>
</dbReference>
<dbReference type="InterPro" id="IPR000644">
    <property type="entry name" value="CBS_dom"/>
</dbReference>
<dbReference type="InterPro" id="IPR046342">
    <property type="entry name" value="CBS_dom_sf"/>
</dbReference>
<dbReference type="InterPro" id="IPR008915">
    <property type="entry name" value="Peptidase_M50"/>
</dbReference>
<dbReference type="InterPro" id="IPR016483">
    <property type="entry name" value="UCP006404_Pept_M50_CBS"/>
</dbReference>
<dbReference type="PANTHER" id="PTHR39188">
    <property type="entry name" value="MEMBRANE-ASSOCIATED ZINC METALLOPROTEASE M50B"/>
    <property type="match status" value="1"/>
</dbReference>
<dbReference type="PANTHER" id="PTHR39188:SF3">
    <property type="entry name" value="STAGE IV SPORULATION PROTEIN FB"/>
    <property type="match status" value="1"/>
</dbReference>
<dbReference type="Pfam" id="PF00571">
    <property type="entry name" value="CBS"/>
    <property type="match status" value="2"/>
</dbReference>
<dbReference type="Pfam" id="PF02163">
    <property type="entry name" value="Peptidase_M50"/>
    <property type="match status" value="2"/>
</dbReference>
<dbReference type="PIRSF" id="PIRSF006404">
    <property type="entry name" value="UCP006404_Pept_M50_CBS"/>
    <property type="match status" value="1"/>
</dbReference>
<dbReference type="SMART" id="SM00116">
    <property type="entry name" value="CBS"/>
    <property type="match status" value="2"/>
</dbReference>
<dbReference type="SUPFAM" id="SSF54631">
    <property type="entry name" value="CBS-domain pair"/>
    <property type="match status" value="1"/>
</dbReference>
<dbReference type="PROSITE" id="PS51371">
    <property type="entry name" value="CBS"/>
    <property type="match status" value="2"/>
</dbReference>
<dbReference type="PROSITE" id="PS00142">
    <property type="entry name" value="ZINC_PROTEASE"/>
    <property type="match status" value="1"/>
</dbReference>
<name>Y392_METJA</name>
<evidence type="ECO:0000255" key="1"/>
<evidence type="ECO:0000255" key="2">
    <source>
        <dbReference type="PROSITE-ProRule" id="PRU00703"/>
    </source>
</evidence>
<evidence type="ECO:0000255" key="3">
    <source>
        <dbReference type="PROSITE-ProRule" id="PRU10095"/>
    </source>
</evidence>
<evidence type="ECO:0000269" key="4">
    <source>
    </source>
</evidence>
<evidence type="ECO:0000305" key="5"/>
<evidence type="ECO:0000305" key="6">
    <source>
    </source>
</evidence>
<evidence type="ECO:0007829" key="7">
    <source>
        <dbReference type="PDB" id="3B4R"/>
    </source>
</evidence>
<gene>
    <name type="ordered locus">MJ0392</name>
</gene>
<feature type="chain" id="PRO_0000088480" description="Zinc metalloprotease MJ0392">
    <location>
        <begin position="1"/>
        <end position="339"/>
    </location>
</feature>
<feature type="transmembrane region" description="Helical" evidence="1">
    <location>
        <begin position="10"/>
        <end position="30"/>
    </location>
</feature>
<feature type="transmembrane region" description="Helical" evidence="1">
    <location>
        <begin position="33"/>
        <end position="53"/>
    </location>
</feature>
<feature type="transmembrane region" description="Helical" evidence="1">
    <location>
        <begin position="96"/>
        <end position="116"/>
    </location>
</feature>
<feature type="transmembrane region" description="Helical" evidence="1">
    <location>
        <begin position="125"/>
        <end position="145"/>
    </location>
</feature>
<feature type="transmembrane region" description="Helical" evidence="1">
    <location>
        <begin position="180"/>
        <end position="200"/>
    </location>
</feature>
<feature type="transmembrane region" description="Helical" evidence="1">
    <location>
        <begin position="251"/>
        <end position="271"/>
    </location>
</feature>
<feature type="domain" description="CBS 1" evidence="2">
    <location>
        <begin position="226"/>
        <end position="281"/>
    </location>
</feature>
<feature type="domain" description="CBS 2" evidence="2">
    <location>
        <begin position="281"/>
        <end position="335"/>
    </location>
</feature>
<feature type="active site" evidence="3 4">
    <location>
        <position position="55"/>
    </location>
</feature>
<feature type="binding site">
    <location>
        <position position="54"/>
    </location>
    <ligand>
        <name>Zn(2+)</name>
        <dbReference type="ChEBI" id="CHEBI:29105"/>
        <note>catalytic</note>
    </ligand>
</feature>
<feature type="binding site">
    <location>
        <position position="58"/>
    </location>
    <ligand>
        <name>Zn(2+)</name>
        <dbReference type="ChEBI" id="CHEBI:29105"/>
        <note>catalytic</note>
    </ligand>
</feature>
<feature type="binding site">
    <location>
        <position position="148"/>
    </location>
    <ligand>
        <name>Zn(2+)</name>
        <dbReference type="ChEBI" id="CHEBI:29105"/>
        <note>catalytic</note>
    </ligand>
</feature>
<feature type="strand" evidence="7">
    <location>
        <begin position="4"/>
        <end position="10"/>
    </location>
</feature>
<feature type="strand" evidence="7">
    <location>
        <begin position="13"/>
        <end position="18"/>
    </location>
</feature>
<feature type="helix" evidence="7">
    <location>
        <begin position="19"/>
        <end position="31"/>
    </location>
</feature>
<feature type="helix" evidence="7">
    <location>
        <begin position="38"/>
        <end position="63"/>
    </location>
</feature>
<feature type="strand" evidence="7">
    <location>
        <begin position="72"/>
        <end position="74"/>
    </location>
</feature>
<feature type="strand" evidence="7">
    <location>
        <begin position="76"/>
        <end position="78"/>
    </location>
</feature>
<feature type="strand" evidence="7">
    <location>
        <begin position="88"/>
        <end position="90"/>
    </location>
</feature>
<feature type="helix" evidence="7">
    <location>
        <begin position="91"/>
        <end position="112"/>
    </location>
</feature>
<feature type="helix" evidence="7">
    <location>
        <begin position="125"/>
        <end position="139"/>
    </location>
</feature>
<feature type="strand" evidence="7">
    <location>
        <begin position="142"/>
        <end position="147"/>
    </location>
</feature>
<feature type="helix" evidence="7">
    <location>
        <begin position="148"/>
        <end position="161"/>
    </location>
</feature>
<feature type="helix" evidence="7">
    <location>
        <begin position="163"/>
        <end position="187"/>
    </location>
</feature>
<feature type="helix" evidence="7">
    <location>
        <begin position="191"/>
        <end position="218"/>
    </location>
</feature>
<keyword id="KW-0002">3D-structure</keyword>
<keyword id="KW-0129">CBS domain</keyword>
<keyword id="KW-1003">Cell membrane</keyword>
<keyword id="KW-0378">Hydrolase</keyword>
<keyword id="KW-0472">Membrane</keyword>
<keyword id="KW-0479">Metal-binding</keyword>
<keyword id="KW-0482">Metalloprotease</keyword>
<keyword id="KW-0645">Protease</keyword>
<keyword id="KW-1185">Reference proteome</keyword>
<keyword id="KW-0677">Repeat</keyword>
<keyword id="KW-0812">Transmembrane</keyword>
<keyword id="KW-1133">Transmembrane helix</keyword>
<keyword id="KW-0862">Zinc</keyword>
<protein>
    <recommendedName>
        <fullName>Zinc metalloprotease MJ0392</fullName>
        <ecNumber>3.4.24.-</ecNumber>
    </recommendedName>
    <alternativeName>
        <fullName>MjS2P</fullName>
    </alternativeName>
    <alternativeName>
        <fullName>S2P endopeptidase</fullName>
    </alternativeName>
    <alternativeName>
        <fullName>Site-2-type intramembrane protease</fullName>
    </alternativeName>
</protein>
<reference key="1">
    <citation type="journal article" date="1996" name="Science">
        <title>Complete genome sequence of the methanogenic archaeon, Methanococcus jannaschii.</title>
        <authorList>
            <person name="Bult C.J."/>
            <person name="White O."/>
            <person name="Olsen G.J."/>
            <person name="Zhou L."/>
            <person name="Fleischmann R.D."/>
            <person name="Sutton G.G."/>
            <person name="Blake J.A."/>
            <person name="FitzGerald L.M."/>
            <person name="Clayton R.A."/>
            <person name="Gocayne J.D."/>
            <person name="Kerlavage A.R."/>
            <person name="Dougherty B.A."/>
            <person name="Tomb J.-F."/>
            <person name="Adams M.D."/>
            <person name="Reich C.I."/>
            <person name="Overbeek R."/>
            <person name="Kirkness E.F."/>
            <person name="Weinstock K.G."/>
            <person name="Merrick J.M."/>
            <person name="Glodek A."/>
            <person name="Scott J.L."/>
            <person name="Geoghagen N.S.M."/>
            <person name="Weidman J.F."/>
            <person name="Fuhrmann J.L."/>
            <person name="Nguyen D."/>
            <person name="Utterback T.R."/>
            <person name="Kelley J.M."/>
            <person name="Peterson J.D."/>
            <person name="Sadow P.W."/>
            <person name="Hanna M.C."/>
            <person name="Cotton M.D."/>
            <person name="Roberts K.M."/>
            <person name="Hurst M.A."/>
            <person name="Kaine B.P."/>
            <person name="Borodovsky M."/>
            <person name="Klenk H.-P."/>
            <person name="Fraser C.M."/>
            <person name="Smith H.O."/>
            <person name="Woese C.R."/>
            <person name="Venter J.C."/>
        </authorList>
    </citation>
    <scope>NUCLEOTIDE SEQUENCE [LARGE SCALE GENOMIC DNA]</scope>
    <source>
        <strain>ATCC 43067 / DSM 2661 / JAL-1 / JCM 10045 / NBRC 100440</strain>
    </source>
</reference>
<reference key="2">
    <citation type="journal article" date="2007" name="Science">
        <title>Structure of a site-2 protease family intramembrane metalloprotease.</title>
        <authorList>
            <person name="Feng L."/>
            <person name="Yan H."/>
            <person name="Wu Z."/>
            <person name="Yan N."/>
            <person name="Wang Z."/>
            <person name="Jeffrey P.D."/>
            <person name="Shi Y."/>
        </authorList>
    </citation>
    <scope>X-RAY CRYSTALLOGRAPHY (3.3 ANGSTROMS) OF 1-224</scope>
    <scope>FUNCTION AS A PROTEASE</scope>
    <scope>ACTIVITY REGULATION</scope>
    <scope>COFACTOR</scope>
    <scope>SUBUNIT</scope>
    <scope>ACTIVE SITE</scope>
    <scope>ZINC-BINDING SITES</scope>
</reference>
<accession>Q57837</accession>